<proteinExistence type="inferred from homology"/>
<feature type="chain" id="PRO_0000180831" description="Flagellar hook protein FlgE">
    <location>
        <begin position="1"/>
        <end position="406"/>
    </location>
</feature>
<feature type="sequence conflict" description="In Ref. 3; AAD33398." evidence="2" ref="3">
    <original>A</original>
    <variation>T</variation>
    <location>
        <position position="158"/>
    </location>
</feature>
<feature type="sequence conflict" description="In Ref. 3; AAD33398." evidence="2" ref="3">
    <original>P</original>
    <variation>A</variation>
    <location>
        <position position="174"/>
    </location>
</feature>
<feature type="sequence conflict" description="In Ref. 3." evidence="2" ref="3">
    <original>TL</original>
    <variation>SV</variation>
    <location>
        <begin position="208"/>
        <end position="209"/>
    </location>
</feature>
<feature type="sequence conflict" description="In Ref. 3." evidence="2" ref="3">
    <original>I</original>
    <variation>V</variation>
    <location>
        <position position="211"/>
    </location>
</feature>
<feature type="sequence conflict" description="In Ref. 3." evidence="2" ref="3">
    <original>A</original>
    <variation>T</variation>
    <location>
        <position position="215"/>
    </location>
</feature>
<feature type="sequence conflict" description="In Ref. 3." evidence="2" ref="3">
    <original>GDALTVPPV</original>
    <variation>STVLGTQ</variation>
    <location>
        <begin position="217"/>
        <end position="225"/>
    </location>
</feature>
<feature type="sequence conflict" description="In Ref. 3." evidence="2" ref="3">
    <original>A</original>
    <variation>N</variation>
    <location>
        <position position="228"/>
    </location>
</feature>
<feature type="sequence conflict" description="In Ref. 3." evidence="2" ref="3">
    <original>A</original>
    <variation>D</variation>
    <location>
        <position position="232"/>
    </location>
</feature>
<feature type="sequence conflict" description="In Ref. 3." evidence="2" ref="3">
    <original>E</original>
    <variation>S</variation>
    <location>
        <position position="234"/>
    </location>
</feature>
<feature type="sequence conflict" description="In Ref. 3." evidence="2" ref="3">
    <original>TS</original>
    <variation>AT</variation>
    <location>
        <begin position="237"/>
        <end position="238"/>
    </location>
</feature>
<feature type="sequence conflict" description="In Ref. 3." evidence="2" ref="3">
    <original>VVANGALIVPP</original>
    <variation>LTTSAMTAL</variation>
    <location>
        <begin position="242"/>
        <end position="252"/>
    </location>
</feature>
<feature type="sequence conflict" description="In Ref. 3." evidence="2" ref="3">
    <original>A</original>
    <variation>G</variation>
    <location>
        <position position="254"/>
    </location>
</feature>
<feature type="sequence conflict" description="In Ref. 3; AAD33398." evidence="2" ref="3">
    <original>VVGSI</original>
    <variation>NLSAL</variation>
    <location>
        <begin position="258"/>
        <end position="262"/>
    </location>
</feature>
<feature type="sequence conflict" description="In Ref. 3; AAD33398." evidence="2" ref="3">
    <original>FS</original>
    <variation>LT</variation>
    <location>
        <begin position="266"/>
        <end position="267"/>
    </location>
</feature>
<feature type="sequence conflict" description="In Ref. 3; AAD33398." evidence="2" ref="3">
    <original>S</original>
    <variation>N</variation>
    <location>
        <position position="282"/>
    </location>
</feature>
<feature type="sequence conflict" description="In Ref. 3; AAD33398." evidence="2" ref="3">
    <original>R</original>
    <variation>K</variation>
    <location>
        <position position="329"/>
    </location>
</feature>
<evidence type="ECO:0000250" key="1"/>
<evidence type="ECO:0000305" key="2"/>
<dbReference type="EMBL" id="AL591688">
    <property type="protein sequence ID" value="CAC45251.1"/>
    <property type="molecule type" value="Genomic_DNA"/>
</dbReference>
<dbReference type="EMBL" id="AF129422">
    <property type="protein sequence ID" value="AAD33398.1"/>
    <property type="molecule type" value="Genomic_DNA"/>
</dbReference>
<dbReference type="RefSeq" id="NP_384785.1">
    <property type="nucleotide sequence ID" value="NC_003047.1"/>
</dbReference>
<dbReference type="RefSeq" id="WP_010968746.1">
    <property type="nucleotide sequence ID" value="NC_003047.1"/>
</dbReference>
<dbReference type="SMR" id="Q9X5Y0"/>
<dbReference type="EnsemblBacteria" id="CAC45251">
    <property type="protein sequence ID" value="CAC45251"/>
    <property type="gene ID" value="SMc03047"/>
</dbReference>
<dbReference type="KEGG" id="sme:SMc03047"/>
<dbReference type="PATRIC" id="fig|266834.11.peg.2053"/>
<dbReference type="eggNOG" id="COG1749">
    <property type="taxonomic scope" value="Bacteria"/>
</dbReference>
<dbReference type="HOGENOM" id="CLU_013687_2_3_5"/>
<dbReference type="OrthoDB" id="8372879at2"/>
<dbReference type="Proteomes" id="UP000001976">
    <property type="component" value="Chromosome"/>
</dbReference>
<dbReference type="GO" id="GO:0009425">
    <property type="term" value="C:bacterial-type flagellum basal body"/>
    <property type="evidence" value="ECO:0007669"/>
    <property type="project" value="UniProtKB-SubCell"/>
</dbReference>
<dbReference type="GO" id="GO:0009424">
    <property type="term" value="C:bacterial-type flagellum hook"/>
    <property type="evidence" value="ECO:0007669"/>
    <property type="project" value="TreeGrafter"/>
</dbReference>
<dbReference type="GO" id="GO:0005829">
    <property type="term" value="C:cytosol"/>
    <property type="evidence" value="ECO:0007669"/>
    <property type="project" value="TreeGrafter"/>
</dbReference>
<dbReference type="GO" id="GO:0071978">
    <property type="term" value="P:bacterial-type flagellum-dependent swarming motility"/>
    <property type="evidence" value="ECO:0007669"/>
    <property type="project" value="TreeGrafter"/>
</dbReference>
<dbReference type="Gene3D" id="2.60.98.20">
    <property type="entry name" value="Flagellar hook protein FlgE"/>
    <property type="match status" value="1"/>
</dbReference>
<dbReference type="InterPro" id="IPR037058">
    <property type="entry name" value="Falgellar_hook_FlgE_sf"/>
</dbReference>
<dbReference type="InterPro" id="IPR001444">
    <property type="entry name" value="Flag_bb_rod_N"/>
</dbReference>
<dbReference type="InterPro" id="IPR019776">
    <property type="entry name" value="Flagellar_basal_body_rod_CS"/>
</dbReference>
<dbReference type="InterPro" id="IPR020013">
    <property type="entry name" value="Flagellar_FlgE/F/G"/>
</dbReference>
<dbReference type="InterPro" id="IPR010930">
    <property type="entry name" value="Flg_bb/hook_C_dom"/>
</dbReference>
<dbReference type="InterPro" id="IPR037925">
    <property type="entry name" value="FlgE/F/G-like"/>
</dbReference>
<dbReference type="InterPro" id="IPR011491">
    <property type="entry name" value="FlgE_D2"/>
</dbReference>
<dbReference type="InterPro" id="IPR053967">
    <property type="entry name" value="LlgE_F_G-like_D1"/>
</dbReference>
<dbReference type="NCBIfam" id="TIGR03506">
    <property type="entry name" value="FlgEFG_subfam"/>
    <property type="match status" value="1"/>
</dbReference>
<dbReference type="PANTHER" id="PTHR30435:SF1">
    <property type="entry name" value="FLAGELLAR HOOK PROTEIN FLGE"/>
    <property type="match status" value="1"/>
</dbReference>
<dbReference type="PANTHER" id="PTHR30435">
    <property type="entry name" value="FLAGELLAR PROTEIN"/>
    <property type="match status" value="1"/>
</dbReference>
<dbReference type="Pfam" id="PF00460">
    <property type="entry name" value="Flg_bb_rod"/>
    <property type="match status" value="1"/>
</dbReference>
<dbReference type="Pfam" id="PF06429">
    <property type="entry name" value="Flg_bbr_C"/>
    <property type="match status" value="1"/>
</dbReference>
<dbReference type="Pfam" id="PF07559">
    <property type="entry name" value="FlgE_D2"/>
    <property type="match status" value="1"/>
</dbReference>
<dbReference type="Pfam" id="PF22692">
    <property type="entry name" value="LlgE_F_G_D1"/>
    <property type="match status" value="1"/>
</dbReference>
<dbReference type="SUPFAM" id="SSF117143">
    <property type="entry name" value="Flagellar hook protein flgE"/>
    <property type="match status" value="1"/>
</dbReference>
<dbReference type="PROSITE" id="PS00588">
    <property type="entry name" value="FLAGELLA_BB_ROD"/>
    <property type="match status" value="1"/>
</dbReference>
<gene>
    <name type="primary">flgE</name>
    <name type="ordered locus">R00679</name>
    <name type="ORF">SMc03047</name>
</gene>
<name>FLGE_RHIME</name>
<accession>Q9X5Y0</accession>
<accession>Q92RZ3</accession>
<comment type="subcellular location">
    <subcellularLocation>
        <location evidence="1">Bacterial flagellum basal body</location>
    </subcellularLocation>
</comment>
<comment type="similarity">
    <text evidence="2">Belongs to the flagella basal body rod proteins family.</text>
</comment>
<organism>
    <name type="scientific">Rhizobium meliloti (strain 1021)</name>
    <name type="common">Ensifer meliloti</name>
    <name type="synonym">Sinorhizobium meliloti</name>
    <dbReference type="NCBI Taxonomy" id="266834"/>
    <lineage>
        <taxon>Bacteria</taxon>
        <taxon>Pseudomonadati</taxon>
        <taxon>Pseudomonadota</taxon>
        <taxon>Alphaproteobacteria</taxon>
        <taxon>Hyphomicrobiales</taxon>
        <taxon>Rhizobiaceae</taxon>
        <taxon>Sinorhizobium/Ensifer group</taxon>
        <taxon>Sinorhizobium</taxon>
    </lineage>
</organism>
<reference key="1">
    <citation type="journal article" date="2001" name="Proc. Natl. Acad. Sci. U.S.A.">
        <title>Analysis of the chromosome sequence of the legume symbiont Sinorhizobium meliloti strain 1021.</title>
        <authorList>
            <person name="Capela D."/>
            <person name="Barloy-Hubler F."/>
            <person name="Gouzy J."/>
            <person name="Bothe G."/>
            <person name="Ampe F."/>
            <person name="Batut J."/>
            <person name="Boistard P."/>
            <person name="Becker A."/>
            <person name="Boutry M."/>
            <person name="Cadieu E."/>
            <person name="Dreano S."/>
            <person name="Gloux S."/>
            <person name="Godrie T."/>
            <person name="Goffeau A."/>
            <person name="Kahn D."/>
            <person name="Kiss E."/>
            <person name="Lelaure V."/>
            <person name="Masuy D."/>
            <person name="Pohl T."/>
            <person name="Portetelle D."/>
            <person name="Puehler A."/>
            <person name="Purnelle B."/>
            <person name="Ramsperger U."/>
            <person name="Renard C."/>
            <person name="Thebault P."/>
            <person name="Vandenbol M."/>
            <person name="Weidner S."/>
            <person name="Galibert F."/>
        </authorList>
    </citation>
    <scope>NUCLEOTIDE SEQUENCE [LARGE SCALE GENOMIC DNA]</scope>
    <source>
        <strain>1021</strain>
    </source>
</reference>
<reference key="2">
    <citation type="journal article" date="2001" name="Science">
        <title>The composite genome of the legume symbiont Sinorhizobium meliloti.</title>
        <authorList>
            <person name="Galibert F."/>
            <person name="Finan T.M."/>
            <person name="Long S.R."/>
            <person name="Puehler A."/>
            <person name="Abola P."/>
            <person name="Ampe F."/>
            <person name="Barloy-Hubler F."/>
            <person name="Barnett M.J."/>
            <person name="Becker A."/>
            <person name="Boistard P."/>
            <person name="Bothe G."/>
            <person name="Boutry M."/>
            <person name="Bowser L."/>
            <person name="Buhrmester J."/>
            <person name="Cadieu E."/>
            <person name="Capela D."/>
            <person name="Chain P."/>
            <person name="Cowie A."/>
            <person name="Davis R.W."/>
            <person name="Dreano S."/>
            <person name="Federspiel N.A."/>
            <person name="Fisher R.F."/>
            <person name="Gloux S."/>
            <person name="Godrie T."/>
            <person name="Goffeau A."/>
            <person name="Golding B."/>
            <person name="Gouzy J."/>
            <person name="Gurjal M."/>
            <person name="Hernandez-Lucas I."/>
            <person name="Hong A."/>
            <person name="Huizar L."/>
            <person name="Hyman R.W."/>
            <person name="Jones T."/>
            <person name="Kahn D."/>
            <person name="Kahn M.L."/>
            <person name="Kalman S."/>
            <person name="Keating D.H."/>
            <person name="Kiss E."/>
            <person name="Komp C."/>
            <person name="Lelaure V."/>
            <person name="Masuy D."/>
            <person name="Palm C."/>
            <person name="Peck M.C."/>
            <person name="Pohl T.M."/>
            <person name="Portetelle D."/>
            <person name="Purnelle B."/>
            <person name="Ramsperger U."/>
            <person name="Surzycki R."/>
            <person name="Thebault P."/>
            <person name="Vandenbol M."/>
            <person name="Vorhoelter F.J."/>
            <person name="Weidner S."/>
            <person name="Wells D.H."/>
            <person name="Wong K."/>
            <person name="Yeh K.-C."/>
            <person name="Batut J."/>
        </authorList>
    </citation>
    <scope>NUCLEOTIDE SEQUENCE [LARGE SCALE GENOMIC DNA]</scope>
    <source>
        <strain>1021</strain>
    </source>
</reference>
<reference key="3">
    <citation type="submission" date="1999-02" db="EMBL/GenBank/DDBJ databases">
        <authorList>
            <person name="Stoehr R."/>
        </authorList>
    </citation>
    <scope>NUCLEOTIDE SEQUENCE [GENOMIC DNA] OF 7-406</scope>
</reference>
<protein>
    <recommendedName>
        <fullName>Flagellar hook protein FlgE</fullName>
    </recommendedName>
</protein>
<sequence length="406" mass="41985">MSLYGTMRTGVSGMNAQSNRLSTVAENIANANTTGYKRASTEFSSMILPSGNGSYNSGGVQTEVRYSISQQGATTFTTSASDLAIDGGGFFIVEGANGQEYLTRAGSFVPDSEGNLVNASGFTLMGYEYEAGVDPTVVVNGFDGLTRVNLASDGLIAAGSTKGSMGANLPSGAPVGDVSTTSLVVYDSQGNTRILDFNYEKTGANAWTLEIVDRASGDALTVPPVTLAFNAAGELTTSPATVVANGALIVPPPATGAVVGSITIDFSKTTQLGYAFNADGGSIDGNAPSKVAGYQIDSDGIVYVKYENGKLDPRYRIALANVQSPDKLRPESGNVYSQGVDSGVIITGFAGSGDFGEILSGALESSNVDIAEELTAMIESQRNYTANSKVFQTGSELLEVLVNLKR</sequence>
<keyword id="KW-0975">Bacterial flagellum</keyword>
<keyword id="KW-1185">Reference proteome</keyword>